<keyword id="KW-0967">Endosome</keyword>
<keyword id="KW-0406">Ion transport</keyword>
<keyword id="KW-0408">Iron</keyword>
<keyword id="KW-0410">Iron transport</keyword>
<keyword id="KW-0472">Membrane</keyword>
<keyword id="KW-1185">Reference proteome</keyword>
<keyword id="KW-0812">Transmembrane</keyword>
<keyword id="KW-1133">Transmembrane helix</keyword>
<keyword id="KW-0813">Transport</keyword>
<gene>
    <name type="primary">SIT1</name>
    <name type="synonym">ARN3</name>
    <name type="ordered locus">YEL065W</name>
</gene>
<reference key="1">
    <citation type="journal article" date="2000" name="J. Biol. Chem.">
        <title>Desferrioxamine-mediated iron uptake in Saccharomyces cerevisiae. Evidence for two pathways of iron uptake.</title>
        <authorList>
            <person name="Yun C.-W."/>
            <person name="Ferea T."/>
            <person name="Rashford J."/>
            <person name="Ardon O."/>
            <person name="Brown P.O."/>
            <person name="Botstein D."/>
            <person name="Kaplan J."/>
            <person name="Philpott C.C."/>
        </authorList>
    </citation>
    <scope>NUCLEOTIDE SEQUENCE [GENOMIC DNA]</scope>
    <scope>SUBCELLULAR LOCATION</scope>
</reference>
<reference key="2">
    <citation type="journal article" date="1997" name="Nature">
        <title>The nucleotide sequence of Saccharomyces cerevisiae chromosome V.</title>
        <authorList>
            <person name="Dietrich F.S."/>
            <person name="Mulligan J.T."/>
            <person name="Hennessy K.M."/>
            <person name="Yelton M.A."/>
            <person name="Allen E."/>
            <person name="Araujo R."/>
            <person name="Aviles E."/>
            <person name="Berno A."/>
            <person name="Brennan T."/>
            <person name="Carpenter J."/>
            <person name="Chen E."/>
            <person name="Cherry J.M."/>
            <person name="Chung E."/>
            <person name="Duncan M."/>
            <person name="Guzman E."/>
            <person name="Hartzell G."/>
            <person name="Hunicke-Smith S."/>
            <person name="Hyman R.W."/>
            <person name="Kayser A."/>
            <person name="Komp C."/>
            <person name="Lashkari D."/>
            <person name="Lew H."/>
            <person name="Lin D."/>
            <person name="Mosedale D."/>
            <person name="Nakahara K."/>
            <person name="Namath A."/>
            <person name="Norgren R."/>
            <person name="Oefner P."/>
            <person name="Oh C."/>
            <person name="Petel F.X."/>
            <person name="Roberts D."/>
            <person name="Sehl P."/>
            <person name="Schramm S."/>
            <person name="Shogren T."/>
            <person name="Smith V."/>
            <person name="Taylor P."/>
            <person name="Wei Y."/>
            <person name="Botstein D."/>
            <person name="Davis R.W."/>
        </authorList>
    </citation>
    <scope>NUCLEOTIDE SEQUENCE [LARGE SCALE GENOMIC DNA]</scope>
    <source>
        <strain>ATCC 204508 / S288c</strain>
    </source>
</reference>
<reference key="3">
    <citation type="journal article" date="2014" name="G3 (Bethesda)">
        <title>The reference genome sequence of Saccharomyces cerevisiae: Then and now.</title>
        <authorList>
            <person name="Engel S.R."/>
            <person name="Dietrich F.S."/>
            <person name="Fisk D.G."/>
            <person name="Binkley G."/>
            <person name="Balakrishnan R."/>
            <person name="Costanzo M.C."/>
            <person name="Dwight S.S."/>
            <person name="Hitz B.C."/>
            <person name="Karra K."/>
            <person name="Nash R.S."/>
            <person name="Weng S."/>
            <person name="Wong E.D."/>
            <person name="Lloyd P."/>
            <person name="Skrzypek M.S."/>
            <person name="Miyasato S.R."/>
            <person name="Simison M."/>
            <person name="Cherry J.M."/>
        </authorList>
    </citation>
    <scope>GENOME REANNOTATION</scope>
    <source>
        <strain>ATCC 204508 / S288c</strain>
    </source>
</reference>
<reference key="4">
    <citation type="journal article" date="2007" name="Genome Res.">
        <title>Approaching a complete repository of sequence-verified protein-encoding clones for Saccharomyces cerevisiae.</title>
        <authorList>
            <person name="Hu Y."/>
            <person name="Rolfs A."/>
            <person name="Bhullar B."/>
            <person name="Murthy T.V.S."/>
            <person name="Zhu C."/>
            <person name="Berger M.F."/>
            <person name="Camargo A.A."/>
            <person name="Kelley F."/>
            <person name="McCarron S."/>
            <person name="Jepson D."/>
            <person name="Richardson A."/>
            <person name="Raphael J."/>
            <person name="Moreira D."/>
            <person name="Taycher E."/>
            <person name="Zuo D."/>
            <person name="Mohr S."/>
            <person name="Kane M.F."/>
            <person name="Williamson J."/>
            <person name="Simpson A.J.G."/>
            <person name="Bulyk M.L."/>
            <person name="Harlow E."/>
            <person name="Marsischky G."/>
            <person name="Kolodner R.D."/>
            <person name="LaBaer J."/>
        </authorList>
    </citation>
    <scope>NUCLEOTIDE SEQUENCE [GENOMIC DNA]</scope>
    <source>
        <strain>ATCC 204508 / S288c</strain>
    </source>
</reference>
<reference key="5">
    <citation type="journal article" date="1998" name="Microbiology">
        <title>Siderophore-mediated iron uptake in Saccharomyces cerevisiae: the SIT1 gene encodes a ferrioxamine B permease that belongs to the major facilitator superfamily.</title>
        <authorList>
            <person name="Lesuisse E."/>
            <person name="Simon-Casteras M."/>
            <person name="Labbe P."/>
        </authorList>
    </citation>
    <scope>FUNCTION</scope>
</reference>
<reference key="6">
    <citation type="journal article" date="2000" name="J. Biol. Chem.">
        <title>Siderophore-iron uptake in Saccharomyces cerevisiae. Identification of ferrichrome and fusarinine transporters.</title>
        <authorList>
            <person name="Yun C.-W."/>
            <person name="Tiedeman J.S."/>
            <person name="Moore R.E."/>
            <person name="Philpott C.C."/>
        </authorList>
    </citation>
    <scope>SUBCELLULAR LOCATION</scope>
</reference>
<sequence length="628" mass="70562">MDPGIANHTLPEEFEEVVVPEMLEKEVGAKVDVKPTLTTSSPAPSYIELIDPGVHNIEIYAEMYNRPIYRVALFFSLFLIAYAYGLDGNIRYTFQAYATSSYSQHSLLSTVNCIKTVIAAVGQIFFARLSDIFGRFSIMIVSIIFYSMGTIIESQAVNITRFAVGGCFYQLGLTGIILILEVIASDFSNLNWRLLALFIPALPFIINTWISGNVTSAIDANWKWGIGMWAFILPLACIPLGICMLHMRYLARKHAKDRLKPEFEALNKLKWKSFCIDIAFWKLDIIGMLLITVFFGCVLVPFTLAGGLKEEWKTAHIIVPEVIGWVVVLPLYMLWEIKYSRHPLTPWDLIQDRGIFFALLIAFFINFNWYMQGDYMYTVLVVAVHESIKSATRITSLYSFVSVIVGTILGFILIKVRRTKPFIIFGISCWIVSFGLLVHYRGDSGAHSGIIGSLCLLGFGAGSFTYVTQASIQASAKTHARMAVVTSLYLATYNIGSAFGSSVSGAVWTNILPKEISKRISDPTLAAQAYGSPFTFITTYTWGTPERIALVMSYRYVQKILCIIGLVFCFPLLGCAFMLRNHKLTDSIALEGNDHLESKNTFEIEEKEESFLKNKFFTHFTSSKDRKD</sequence>
<feature type="chain" id="PRO_0000084878" description="Siderophore iron transporter 1">
    <location>
        <begin position="1"/>
        <end position="628"/>
    </location>
</feature>
<feature type="transmembrane region" description="Helical" evidence="1">
    <location>
        <begin position="68"/>
        <end position="88"/>
    </location>
</feature>
<feature type="transmembrane region" description="Helical" evidence="1">
    <location>
        <begin position="107"/>
        <end position="127"/>
    </location>
</feature>
<feature type="transmembrane region" description="Helical" evidence="1">
    <location>
        <begin position="132"/>
        <end position="152"/>
    </location>
</feature>
<feature type="transmembrane region" description="Helical" evidence="1">
    <location>
        <begin position="164"/>
        <end position="184"/>
    </location>
</feature>
<feature type="transmembrane region" description="Helical" evidence="1">
    <location>
        <begin position="194"/>
        <end position="214"/>
    </location>
</feature>
<feature type="transmembrane region" description="Helical" evidence="1">
    <location>
        <begin position="225"/>
        <end position="245"/>
    </location>
</feature>
<feature type="transmembrane region" description="Helical" evidence="1">
    <location>
        <begin position="285"/>
        <end position="305"/>
    </location>
</feature>
<feature type="transmembrane region" description="Helical" evidence="1">
    <location>
        <begin position="317"/>
        <end position="337"/>
    </location>
</feature>
<feature type="transmembrane region" description="Helical" evidence="1">
    <location>
        <begin position="354"/>
        <end position="374"/>
    </location>
</feature>
<feature type="transmembrane region" description="Helical" evidence="1">
    <location>
        <begin position="394"/>
        <end position="414"/>
    </location>
</feature>
<feature type="transmembrane region" description="Helical" evidence="1">
    <location>
        <begin position="420"/>
        <end position="440"/>
    </location>
</feature>
<feature type="transmembrane region" description="Helical" evidence="1">
    <location>
        <begin position="448"/>
        <end position="468"/>
    </location>
</feature>
<feature type="transmembrane region" description="Helical" evidence="1">
    <location>
        <begin position="488"/>
        <end position="508"/>
    </location>
</feature>
<feature type="transmembrane region" description="Helical" evidence="1">
    <location>
        <begin position="559"/>
        <end position="579"/>
    </location>
</feature>
<feature type="sequence conflict" description="In Ref. 4; AAU09717." evidence="5" ref="4">
    <original>E</original>
    <variation>G</variation>
    <location>
        <position position="386"/>
    </location>
</feature>
<name>SIT1_YEAST</name>
<accession>P39980</accession>
<accession>D3DLI5</accession>
<accession>E9P951</accession>
<evidence type="ECO:0000255" key="1"/>
<evidence type="ECO:0000269" key="2">
    <source>
    </source>
</evidence>
<evidence type="ECO:0000269" key="3">
    <source>
    </source>
</evidence>
<evidence type="ECO:0000269" key="4">
    <source>
    </source>
</evidence>
<evidence type="ECO:0000305" key="5"/>
<comment type="function">
    <text evidence="4">Involved in the transport of siderophore ferrioxamine B and so has a role in iron homeostasis.</text>
</comment>
<comment type="subcellular location">
    <subcellularLocation>
        <location evidence="2 3">Endosome membrane</location>
        <topology evidence="2 3">Multi-pass membrane protein</topology>
    </subcellularLocation>
</comment>
<comment type="similarity">
    <text evidence="5">Belongs to the major facilitator superfamily.</text>
</comment>
<protein>
    <recommendedName>
        <fullName>Siderophore iron transporter 1</fullName>
    </recommendedName>
    <alternativeName>
        <fullName>Ferrioxamine B permease</fullName>
    </alternativeName>
    <alternativeName>
        <fullName>Siderophore iron transporter ARN3</fullName>
    </alternativeName>
</protein>
<organism>
    <name type="scientific">Saccharomyces cerevisiae (strain ATCC 204508 / S288c)</name>
    <name type="common">Baker's yeast</name>
    <dbReference type="NCBI Taxonomy" id="559292"/>
    <lineage>
        <taxon>Eukaryota</taxon>
        <taxon>Fungi</taxon>
        <taxon>Dikarya</taxon>
        <taxon>Ascomycota</taxon>
        <taxon>Saccharomycotina</taxon>
        <taxon>Saccharomycetes</taxon>
        <taxon>Saccharomycetales</taxon>
        <taxon>Saccharomycetaceae</taxon>
        <taxon>Saccharomyces</taxon>
    </lineage>
</organism>
<dbReference type="EMBL" id="U18795">
    <property type="protein sequence ID" value="AAB65022.1"/>
    <property type="molecule type" value="Genomic_DNA"/>
</dbReference>
<dbReference type="EMBL" id="AY723800">
    <property type="protein sequence ID" value="AAU09717.1"/>
    <property type="molecule type" value="Genomic_DNA"/>
</dbReference>
<dbReference type="EMBL" id="BK006939">
    <property type="protein sequence ID" value="DAA07589.1"/>
    <property type="molecule type" value="Genomic_DNA"/>
</dbReference>
<dbReference type="PIR" id="S50524">
    <property type="entry name" value="S50524"/>
</dbReference>
<dbReference type="RefSeq" id="NP_010849.3">
    <property type="nucleotide sequence ID" value="NM_001178880.3"/>
</dbReference>
<dbReference type="SMR" id="P39980"/>
<dbReference type="BioGRID" id="36664">
    <property type="interactions" value="77"/>
</dbReference>
<dbReference type="DIP" id="DIP-7273N"/>
<dbReference type="FunCoup" id="P39980">
    <property type="interactions" value="80"/>
</dbReference>
<dbReference type="IntAct" id="P39980">
    <property type="interactions" value="27"/>
</dbReference>
<dbReference type="STRING" id="4932.YEL065W"/>
<dbReference type="TCDB" id="2.A.1.16.1">
    <property type="family name" value="the major facilitator superfamily (mfs)"/>
</dbReference>
<dbReference type="iPTMnet" id="P39980"/>
<dbReference type="PaxDb" id="4932-YEL065W"/>
<dbReference type="PeptideAtlas" id="P39980"/>
<dbReference type="EnsemblFungi" id="YEL065W_mRNA">
    <property type="protein sequence ID" value="YEL065W"/>
    <property type="gene ID" value="YEL065W"/>
</dbReference>
<dbReference type="GeneID" id="856644"/>
<dbReference type="KEGG" id="sce:YEL065W"/>
<dbReference type="AGR" id="SGD:S000000791"/>
<dbReference type="SGD" id="S000000791">
    <property type="gene designation" value="SIT1"/>
</dbReference>
<dbReference type="VEuPathDB" id="FungiDB:YEL065W"/>
<dbReference type="eggNOG" id="KOG0254">
    <property type="taxonomic scope" value="Eukaryota"/>
</dbReference>
<dbReference type="GeneTree" id="ENSGT00940000176305"/>
<dbReference type="HOGENOM" id="CLU_012970_2_1_1"/>
<dbReference type="InParanoid" id="P39980"/>
<dbReference type="OMA" id="VMLNTAW"/>
<dbReference type="OrthoDB" id="2241241at2759"/>
<dbReference type="BioCyc" id="YEAST:G3O-30180-MONOMER"/>
<dbReference type="BioGRID-ORCS" id="856644">
    <property type="hits" value="0 hits in 10 CRISPR screens"/>
</dbReference>
<dbReference type="PRO" id="PR:P39980"/>
<dbReference type="Proteomes" id="UP000002311">
    <property type="component" value="Chromosome V"/>
</dbReference>
<dbReference type="RNAct" id="P39980">
    <property type="molecule type" value="protein"/>
</dbReference>
<dbReference type="GO" id="GO:0031410">
    <property type="term" value="C:cytoplasmic vesicle"/>
    <property type="evidence" value="ECO:0000314"/>
    <property type="project" value="SGD"/>
</dbReference>
<dbReference type="GO" id="GO:0005768">
    <property type="term" value="C:endosome"/>
    <property type="evidence" value="ECO:0000314"/>
    <property type="project" value="SGD"/>
</dbReference>
<dbReference type="GO" id="GO:0010008">
    <property type="term" value="C:endosome membrane"/>
    <property type="evidence" value="ECO:0007669"/>
    <property type="project" value="UniProtKB-SubCell"/>
</dbReference>
<dbReference type="GO" id="GO:0000324">
    <property type="term" value="C:fungal-type vacuole"/>
    <property type="evidence" value="ECO:0007005"/>
    <property type="project" value="SGD"/>
</dbReference>
<dbReference type="GO" id="GO:0005886">
    <property type="term" value="C:plasma membrane"/>
    <property type="evidence" value="ECO:0000318"/>
    <property type="project" value="GO_Central"/>
</dbReference>
<dbReference type="GO" id="GO:0005774">
    <property type="term" value="C:vacuolar membrane"/>
    <property type="evidence" value="ECO:0000318"/>
    <property type="project" value="GO_Central"/>
</dbReference>
<dbReference type="GO" id="GO:0015344">
    <property type="term" value="F:siderophore uptake transmembrane transporter activity"/>
    <property type="evidence" value="ECO:0000315"/>
    <property type="project" value="SGD"/>
</dbReference>
<dbReference type="GO" id="GO:0015343">
    <property type="term" value="F:siderophore-iron transmembrane transporter activity"/>
    <property type="evidence" value="ECO:0000318"/>
    <property type="project" value="GO_Central"/>
</dbReference>
<dbReference type="GO" id="GO:0006879">
    <property type="term" value="P:intracellular iron ion homeostasis"/>
    <property type="evidence" value="ECO:0000314"/>
    <property type="project" value="SGD"/>
</dbReference>
<dbReference type="GO" id="GO:0015891">
    <property type="term" value="P:siderophore transport"/>
    <property type="evidence" value="ECO:0000315"/>
    <property type="project" value="SGD"/>
</dbReference>
<dbReference type="GO" id="GO:0055085">
    <property type="term" value="P:transmembrane transport"/>
    <property type="evidence" value="ECO:0000315"/>
    <property type="project" value="SGD"/>
</dbReference>
<dbReference type="CDD" id="cd17322">
    <property type="entry name" value="MFS_ARN_like"/>
    <property type="match status" value="1"/>
</dbReference>
<dbReference type="FunFam" id="1.20.1250.20:FF:000197">
    <property type="entry name" value="Siderophore iron transporter 1"/>
    <property type="match status" value="1"/>
</dbReference>
<dbReference type="FunFam" id="1.20.1250.20:FF:000412">
    <property type="entry name" value="SIT1p Ferrioxamine B transporter"/>
    <property type="match status" value="1"/>
</dbReference>
<dbReference type="Gene3D" id="1.20.1250.20">
    <property type="entry name" value="MFS general substrate transporter like domains"/>
    <property type="match status" value="2"/>
</dbReference>
<dbReference type="InterPro" id="IPR036259">
    <property type="entry name" value="MFS_trans_sf"/>
</dbReference>
<dbReference type="PANTHER" id="PTHR23501:SF92">
    <property type="entry name" value="GLUTATHIONE EXCHANGER 1-RELATED"/>
    <property type="match status" value="1"/>
</dbReference>
<dbReference type="PANTHER" id="PTHR23501">
    <property type="entry name" value="MAJOR FACILITATOR SUPERFAMILY"/>
    <property type="match status" value="1"/>
</dbReference>
<dbReference type="SUPFAM" id="SSF103473">
    <property type="entry name" value="MFS general substrate transporter"/>
    <property type="match status" value="1"/>
</dbReference>
<proteinExistence type="inferred from homology"/>